<sequence length="1778" mass="191648">MKKKFSIVIISVLLLGYLAPFDTLLVGADETTVSEDTAVKTAEADSATEGIESETGSDDETAEEPKEAKEAEASKETTEKEEKAKTEEPASNIKTEINTDKSQLKQTSLKAAVPAGSTYNSLFPDDNLAKKLAVIITGNAAATGNESVDSAALLAISQLDLSGETGNDPTDISNIEGLQYLENLTSLNLSENNISDLAPLKDLVNLVSLNLSSNRTLVNLSGVEDLVNLQELNVSANKALEDISQVASLPVLKEISAQGCNIKTLELKNPAGAVLPELETFYLQENDLTNLTSLAKLPKLKNLYIKGNASLKSLETLNGATKLQLIDASNCTDLETLGDISGLSELEMIQLSGCSKLKEITSLKNLPNLVNITADSCAIEDLGTLNNLPKLQTLVLSDNENLTNITAITDLPQLKTLTLDGCGITSIGTLDNLPKLEKLDLKENQITSISEITDLPRLSYLDVSVNNLTTIGDLKKLPLLEWLNVSSNRLSDVSTLTNFPSLNYINISNNVIRTVGKMTELPSLKEFYAQNNSISDISMIHDMPNLRKVDASNNLITNIGTFDNLPKLQSLDVHSNRITSTSVIHDLPSLETFNAQTNLITNIGTMDNLPDLTYVNLSFNRIPSLAPIGDLPNLETLIVSDNNSYLRSLGTMDGVPKLRILDLQNNYLNYTGTEGNLSSLSDLTNLTELNLRNNVYIDDISGLSTLSRLIYLNLDSNKIEDISALSNLTNLQELTLENNKIENISALSDLENLNKLVVSKNKIIDISPVANMVNRGAIVTASNQTYTLPTVLSYQSSFTIDNPVIWYDGTLLAPSSIGNSGNYKDGKITWTNMTATSSSTLFNFNRLKDGLTFSGTVTQPYKSAAKVTADAEQTYTIGDTISEEQFLKDVNAKSSDGAPVTSDFATVVDLNTFGEYEVTLTSEKDGIQGDSCKVIVKVLHGAPVISADQTISYDKHATITEKQFLEDIHASTDLDTAITTNFSTAVNLNKGGDYTVALNSENEDGVKAETVYVTVTVNKDPAPIISAKTEITYDKFSKKTEAAFLDDIDADTNDGSIVTSNFATAVNLDKAGDYTVTLNSINSDGVAGTPTAIIVHVEKEKIATISTNTAQQYEKYAKINETQFLKDVHASINASPTTAVLESDFETVVKLDVPGTYTVTITATNEDGGVSAPKEVSVIVRKIPAPEITADKEITYPKFDEVSEAEFLNDIHATISDKNVAITSNFSTDVNLNKAGDYTVTLNATNEDGVKATPVEVIVHVQQGERPVITADATISYDKFANITEAKFLEDIHATSSDGQSSTVITSNFQTATNFKTAMSYTVTLNAVNEDGISAEPVAVTVTINKEPAAALKADAEVSYAKNEAVTESDFFKDVHLEGTEAPSTAKATSNFDSVVDRSKTGDYTVTINATNEDGAVSTPIEVIVHIEAESAPVITANAEVKYNKHEQTDERRFLYDSEAKIDEANVEIKTDFAEKVDINKVGTYTVTLTATNEDGQAANPVEVSVIVSDAAAEKVNVKYVDENGSEISAAETLTGNLDETFSIDAKSIAGYKCDATLSGVFSTVEQTVVFHYKAIKPGVVTIKYEDTNGKAVDEDKQITGEVGDDFEAEAQTVSGYSCRAIASGKITEEPQTITFTYSTATPSKKSGEITVQYVDESGKKLADSKKVTGNIDDSYSVEAKAIEGYSVVGDDSAKGVFTEKSQTVTFKYKKNTQVSKDDPKVKGKTNQPSSTDTKLKVDNNSLPATGDTENMILAVLIGFNMLIVASIFLFRKPKTNQ</sequence>
<protein>
    <recommendedName>
        <fullName evidence="5">Internalin I</fullName>
    </recommendedName>
</protein>
<proteinExistence type="evidence at transcript level"/>
<organism>
    <name type="scientific">Listeria monocytogenes serovar 1/2a (strain ATCC BAA-679 / EGD-e)</name>
    <dbReference type="NCBI Taxonomy" id="169963"/>
    <lineage>
        <taxon>Bacteria</taxon>
        <taxon>Bacillati</taxon>
        <taxon>Bacillota</taxon>
        <taxon>Bacilli</taxon>
        <taxon>Bacillales</taxon>
        <taxon>Listeriaceae</taxon>
        <taxon>Listeria</taxon>
    </lineage>
</organism>
<keyword id="KW-0134">Cell wall</keyword>
<keyword id="KW-0433">Leucine-rich repeat</keyword>
<keyword id="KW-0572">Peptidoglycan-anchor</keyword>
<keyword id="KW-1185">Reference proteome</keyword>
<keyword id="KW-0677">Repeat</keyword>
<keyword id="KW-0964">Secreted</keyword>
<keyword id="KW-0732">Signal</keyword>
<dbReference type="EMBL" id="AL591975">
    <property type="protein sequence ID" value="CAC98412.1"/>
    <property type="molecule type" value="Genomic_DNA"/>
</dbReference>
<dbReference type="PIR" id="AF1116">
    <property type="entry name" value="AF1116"/>
</dbReference>
<dbReference type="RefSeq" id="NP_463863.1">
    <property type="nucleotide sequence ID" value="NC_003210.1"/>
</dbReference>
<dbReference type="RefSeq" id="WP_010989427.1">
    <property type="nucleotide sequence ID" value="NZ_CP149495.1"/>
</dbReference>
<dbReference type="SMR" id="Q8YA32"/>
<dbReference type="STRING" id="169963.gene:17592984"/>
<dbReference type="PaxDb" id="169963-lmo0333"/>
<dbReference type="EnsemblBacteria" id="CAC98412">
    <property type="protein sequence ID" value="CAC98412"/>
    <property type="gene ID" value="CAC98412"/>
</dbReference>
<dbReference type="GeneID" id="987568"/>
<dbReference type="KEGG" id="lmo:lmo0333"/>
<dbReference type="PATRIC" id="fig|169963.11.peg.342"/>
<dbReference type="eggNOG" id="COG4886">
    <property type="taxonomic scope" value="Bacteria"/>
</dbReference>
<dbReference type="eggNOG" id="COG4932">
    <property type="taxonomic scope" value="Bacteria"/>
</dbReference>
<dbReference type="HOGENOM" id="CLU_241292_0_0_9"/>
<dbReference type="OrthoDB" id="2366125at2"/>
<dbReference type="PhylomeDB" id="Q8YA32"/>
<dbReference type="BioCyc" id="LMON169963:LMO0333-MONOMER"/>
<dbReference type="Proteomes" id="UP000000817">
    <property type="component" value="Chromosome"/>
</dbReference>
<dbReference type="GO" id="GO:0005576">
    <property type="term" value="C:extracellular region"/>
    <property type="evidence" value="ECO:0007669"/>
    <property type="project" value="UniProtKB-KW"/>
</dbReference>
<dbReference type="Gene3D" id="2.60.40.1220">
    <property type="match status" value="1"/>
</dbReference>
<dbReference type="Gene3D" id="2.60.40.10">
    <property type="entry name" value="Immunoglobulins"/>
    <property type="match status" value="8"/>
</dbReference>
<dbReference type="Gene3D" id="3.10.20.320">
    <property type="entry name" value="Putative peptidoglycan bound protein (lpxtg motif)"/>
    <property type="match status" value="3"/>
</dbReference>
<dbReference type="Gene3D" id="3.80.10.10">
    <property type="entry name" value="Ribonuclease Inhibitor"/>
    <property type="match status" value="3"/>
</dbReference>
<dbReference type="InterPro" id="IPR014755">
    <property type="entry name" value="Cu-Rt/internalin_Ig-like"/>
</dbReference>
<dbReference type="InterPro" id="IPR013783">
    <property type="entry name" value="Ig-like_fold"/>
</dbReference>
<dbReference type="InterPro" id="IPR014756">
    <property type="entry name" value="Ig_E-set"/>
</dbReference>
<dbReference type="InterPro" id="IPR012569">
    <property type="entry name" value="Inl_IR"/>
</dbReference>
<dbReference type="InterPro" id="IPR044056">
    <property type="entry name" value="InlI_Ig-like"/>
</dbReference>
<dbReference type="InterPro" id="IPR001611">
    <property type="entry name" value="Leu-rich_rpt"/>
</dbReference>
<dbReference type="InterPro" id="IPR025875">
    <property type="entry name" value="Leu-rich_rpt_4"/>
</dbReference>
<dbReference type="InterPro" id="IPR003591">
    <property type="entry name" value="Leu-rich_rpt_typical-subtyp"/>
</dbReference>
<dbReference type="InterPro" id="IPR019931">
    <property type="entry name" value="LPXTG_anchor"/>
</dbReference>
<dbReference type="InterPro" id="IPR032675">
    <property type="entry name" value="LRR_dom_sf"/>
</dbReference>
<dbReference type="InterPro" id="IPR055414">
    <property type="entry name" value="LRR_R13L4/SHOC2-like"/>
</dbReference>
<dbReference type="InterPro" id="IPR009459">
    <property type="entry name" value="MucBP_dom"/>
</dbReference>
<dbReference type="InterPro" id="IPR035986">
    <property type="entry name" value="PKD_dom_sf"/>
</dbReference>
<dbReference type="InterPro" id="IPR050836">
    <property type="entry name" value="SDS22/Internalin_LRR"/>
</dbReference>
<dbReference type="NCBIfam" id="NF033932">
    <property type="entry name" value="LapB_rpt_80"/>
    <property type="match status" value="8"/>
</dbReference>
<dbReference type="NCBIfam" id="TIGR01167">
    <property type="entry name" value="LPXTG_anchor"/>
    <property type="match status" value="1"/>
</dbReference>
<dbReference type="PANTHER" id="PTHR46652">
    <property type="entry name" value="LEUCINE-RICH REPEAT AND IQ DOMAIN-CONTAINING PROTEIN 1-RELATED"/>
    <property type="match status" value="1"/>
</dbReference>
<dbReference type="PANTHER" id="PTHR46652:SF3">
    <property type="entry name" value="LEUCINE-RICH REPEAT-CONTAINING PROTEIN 9"/>
    <property type="match status" value="1"/>
</dbReference>
<dbReference type="Pfam" id="PF18981">
    <property type="entry name" value="InlK_D3"/>
    <property type="match status" value="8"/>
</dbReference>
<dbReference type="Pfam" id="PF23598">
    <property type="entry name" value="LRR_14"/>
    <property type="match status" value="1"/>
</dbReference>
<dbReference type="Pfam" id="PF12799">
    <property type="entry name" value="LRR_4"/>
    <property type="match status" value="1"/>
</dbReference>
<dbReference type="Pfam" id="PF08191">
    <property type="entry name" value="LRR_adjacent"/>
    <property type="match status" value="1"/>
</dbReference>
<dbReference type="Pfam" id="PF06458">
    <property type="entry name" value="MucBP"/>
    <property type="match status" value="3"/>
</dbReference>
<dbReference type="SMART" id="SM00364">
    <property type="entry name" value="LRR_BAC"/>
    <property type="match status" value="14"/>
</dbReference>
<dbReference type="SMART" id="SM00365">
    <property type="entry name" value="LRR_SD22"/>
    <property type="match status" value="13"/>
</dbReference>
<dbReference type="SMART" id="SM00369">
    <property type="entry name" value="LRR_TYP"/>
    <property type="match status" value="12"/>
</dbReference>
<dbReference type="SUPFAM" id="SSF81296">
    <property type="entry name" value="E set domains"/>
    <property type="match status" value="1"/>
</dbReference>
<dbReference type="SUPFAM" id="SSF52058">
    <property type="entry name" value="L domain-like"/>
    <property type="match status" value="3"/>
</dbReference>
<dbReference type="SUPFAM" id="SSF49299">
    <property type="entry name" value="PKD domain"/>
    <property type="match status" value="1"/>
</dbReference>
<dbReference type="PROSITE" id="PS50847">
    <property type="entry name" value="GRAM_POS_ANCHORING"/>
    <property type="match status" value="1"/>
</dbReference>
<dbReference type="PROSITE" id="PS51450">
    <property type="entry name" value="LRR"/>
    <property type="match status" value="24"/>
</dbReference>
<comment type="function">
    <text evidence="4">A role in virulence could not be demonstrated.</text>
</comment>
<comment type="subcellular location">
    <subcellularLocation>
        <location evidence="2">Secreted</location>
        <location evidence="2">Cell wall</location>
        <topology evidence="2">Peptidoglycan-anchor</topology>
    </subcellularLocation>
</comment>
<comment type="induction">
    <text evidence="4">Expressed in late exponential phase.</text>
</comment>
<comment type="disruption phenotype">
    <text evidence="4">No visible effect on colonization of host tissue culture cells; no change in organ colonization in mice.</text>
</comment>
<comment type="similarity">
    <text evidence="6">Belongs to the internalin family.</text>
</comment>
<feature type="signal peptide" evidence="1">
    <location>
        <begin position="1"/>
        <end position="28"/>
    </location>
</feature>
<feature type="chain" id="PRO_0000252675" description="Internalin I">
    <location>
        <begin position="29"/>
        <end position="1746"/>
    </location>
</feature>
<feature type="propeptide" id="PRO_0000252676" description="Removed by sortase" evidence="2">
    <location>
        <begin position="1747"/>
        <end position="1778"/>
    </location>
</feature>
<feature type="repeat" description="LRR 1">
    <location>
        <begin position="155"/>
        <end position="179"/>
    </location>
</feature>
<feature type="repeat" description="LRR 2">
    <location>
        <begin position="183"/>
        <end position="204"/>
    </location>
</feature>
<feature type="repeat" description="LRR 3">
    <location>
        <begin position="205"/>
        <end position="227"/>
    </location>
</feature>
<feature type="repeat" description="LRR 4">
    <location>
        <begin position="228"/>
        <end position="250"/>
    </location>
</feature>
<feature type="repeat" description="LRR 5">
    <location>
        <begin position="251"/>
        <end position="272"/>
    </location>
</feature>
<feature type="repeat" description="LRR 6">
    <location>
        <begin position="277"/>
        <end position="298"/>
    </location>
</feature>
<feature type="repeat" description="LRR 7">
    <location>
        <begin position="299"/>
        <end position="321"/>
    </location>
</feature>
<feature type="repeat" description="LRR 8">
    <location>
        <begin position="322"/>
        <end position="344"/>
    </location>
</feature>
<feature type="repeat" description="LRR 9">
    <location>
        <begin position="345"/>
        <end position="367"/>
    </location>
</feature>
<feature type="repeat" description="LRR 10">
    <location>
        <begin position="368"/>
        <end position="389"/>
    </location>
</feature>
<feature type="repeat" description="LRR 11">
    <location>
        <begin position="390"/>
        <end position="412"/>
    </location>
</feature>
<feature type="repeat" description="LRR 12">
    <location>
        <begin position="413"/>
        <end position="434"/>
    </location>
</feature>
<feature type="repeat" description="LRR 13">
    <location>
        <begin position="435"/>
        <end position="456"/>
    </location>
</feature>
<feature type="repeat" description="LRR 14">
    <location>
        <begin position="457"/>
        <end position="478"/>
    </location>
</feature>
<feature type="repeat" description="LRR 15">
    <location>
        <begin position="479"/>
        <end position="500"/>
    </location>
</feature>
<feature type="repeat" description="LRR 16">
    <location>
        <begin position="501"/>
        <end position="522"/>
    </location>
</feature>
<feature type="repeat" description="LRR 17">
    <location>
        <begin position="523"/>
        <end position="544"/>
    </location>
</feature>
<feature type="repeat" description="LRR 18">
    <location>
        <begin position="545"/>
        <end position="566"/>
    </location>
</feature>
<feature type="repeat" description="LRR 19">
    <location>
        <begin position="567"/>
        <end position="588"/>
    </location>
</feature>
<feature type="repeat" description="LRR 20">
    <location>
        <begin position="589"/>
        <end position="610"/>
    </location>
</feature>
<feature type="repeat" description="LRR 21">
    <location>
        <begin position="611"/>
        <end position="632"/>
    </location>
</feature>
<feature type="repeat" description="LRR 22">
    <location>
        <begin position="633"/>
        <end position="653"/>
    </location>
</feature>
<feature type="repeat" description="LRR 23">
    <location>
        <begin position="657"/>
        <end position="678"/>
    </location>
</feature>
<feature type="repeat" description="LRR 24">
    <location>
        <begin position="685"/>
        <end position="707"/>
    </location>
</feature>
<feature type="repeat" description="LRR 25">
    <location>
        <begin position="708"/>
        <end position="729"/>
    </location>
</feature>
<feature type="repeat" description="LRR 26">
    <location>
        <begin position="730"/>
        <end position="751"/>
    </location>
</feature>
<feature type="repeat" description="LRR 27">
    <location>
        <begin position="752"/>
        <end position="773"/>
    </location>
</feature>
<feature type="domain" description="LRRCT">
    <location>
        <begin position="785"/>
        <end position="872"/>
    </location>
</feature>
<feature type="domain" description="MucBP 1">
    <location>
        <begin position="1510"/>
        <end position="1569"/>
    </location>
</feature>
<feature type="domain" description="MucBP 2">
    <location>
        <begin position="1575"/>
        <end position="1634"/>
    </location>
</feature>
<feature type="domain" description="MucBP 3">
    <location>
        <begin position="1644"/>
        <end position="1705"/>
    </location>
</feature>
<feature type="region of interest" description="Disordered" evidence="3">
    <location>
        <begin position="36"/>
        <end position="101"/>
    </location>
</feature>
<feature type="region of interest" description="Disordered" evidence="3">
    <location>
        <begin position="1716"/>
        <end position="1742"/>
    </location>
</feature>
<feature type="short sequence motif" description="LPXTG sorting signal" evidence="2">
    <location>
        <begin position="1743"/>
        <end position="1747"/>
    </location>
</feature>
<feature type="compositionally biased region" description="Acidic residues" evidence="3">
    <location>
        <begin position="51"/>
        <end position="62"/>
    </location>
</feature>
<feature type="compositionally biased region" description="Basic and acidic residues" evidence="3">
    <location>
        <begin position="63"/>
        <end position="88"/>
    </location>
</feature>
<feature type="compositionally biased region" description="Polar residues" evidence="3">
    <location>
        <begin position="1725"/>
        <end position="1742"/>
    </location>
</feature>
<feature type="modified residue" description="Pentaglycyl murein peptidoglycan amidated threonine" evidence="2">
    <location>
        <position position="1746"/>
    </location>
</feature>
<evidence type="ECO:0000255" key="1"/>
<evidence type="ECO:0000255" key="2">
    <source>
        <dbReference type="PROSITE-ProRule" id="PRU00477"/>
    </source>
</evidence>
<evidence type="ECO:0000256" key="3">
    <source>
        <dbReference type="SAM" id="MobiDB-lite"/>
    </source>
</evidence>
<evidence type="ECO:0000269" key="4">
    <source>
    </source>
</evidence>
<evidence type="ECO:0000303" key="5">
    <source>
    </source>
</evidence>
<evidence type="ECO:0000305" key="6">
    <source>
    </source>
</evidence>
<accession>Q8YA32</accession>
<reference key="1">
    <citation type="journal article" date="2001" name="Science">
        <title>Comparative genomics of Listeria species.</title>
        <authorList>
            <person name="Glaser P."/>
            <person name="Frangeul L."/>
            <person name="Buchrieser C."/>
            <person name="Rusniok C."/>
            <person name="Amend A."/>
            <person name="Baquero F."/>
            <person name="Berche P."/>
            <person name="Bloecker H."/>
            <person name="Brandt P."/>
            <person name="Chakraborty T."/>
            <person name="Charbit A."/>
            <person name="Chetouani F."/>
            <person name="Couve E."/>
            <person name="de Daruvar A."/>
            <person name="Dehoux P."/>
            <person name="Domann E."/>
            <person name="Dominguez-Bernal G."/>
            <person name="Duchaud E."/>
            <person name="Durant L."/>
            <person name="Dussurget O."/>
            <person name="Entian K.-D."/>
            <person name="Fsihi H."/>
            <person name="Garcia-del Portillo F."/>
            <person name="Garrido P."/>
            <person name="Gautier L."/>
            <person name="Goebel W."/>
            <person name="Gomez-Lopez N."/>
            <person name="Hain T."/>
            <person name="Hauf J."/>
            <person name="Jackson D."/>
            <person name="Jones L.-M."/>
            <person name="Kaerst U."/>
            <person name="Kreft J."/>
            <person name="Kuhn M."/>
            <person name="Kunst F."/>
            <person name="Kurapkat G."/>
            <person name="Madueno E."/>
            <person name="Maitournam A."/>
            <person name="Mata Vicente J."/>
            <person name="Ng E."/>
            <person name="Nedjari H."/>
            <person name="Nordsiek G."/>
            <person name="Novella S."/>
            <person name="de Pablos B."/>
            <person name="Perez-Diaz J.-C."/>
            <person name="Purcell R."/>
            <person name="Remmel B."/>
            <person name="Rose M."/>
            <person name="Schlueter T."/>
            <person name="Simoes N."/>
            <person name="Tierrez A."/>
            <person name="Vazquez-Boland J.-A."/>
            <person name="Voss H."/>
            <person name="Wehland J."/>
            <person name="Cossart P."/>
        </authorList>
    </citation>
    <scope>NUCLEOTIDE SEQUENCE [LARGE SCALE GENOMIC DNA]</scope>
    <source>
        <strain>ATCC BAA-679 / EGD-e</strain>
    </source>
</reference>
<reference key="2">
    <citation type="journal article" date="2005" name="Infect. Immun.">
        <title>LPXTG protein InlJ, a newly identified internalin involved in Listeria monocytogenes virulence.</title>
        <authorList>
            <person name="Sabet C."/>
            <person name="Lecuit M."/>
            <person name="Cabanes D."/>
            <person name="Cossart P."/>
            <person name="Bierne H."/>
        </authorList>
    </citation>
    <scope>INDUCTION</scope>
    <scope>DISRUPTION PHENOTYPE</scope>
    <source>
        <strain>ATCC BAA-679 / EGD-e</strain>
        <strain>CLIP 80459 / Serotype 4b</strain>
    </source>
</reference>
<gene>
    <name type="primary">inlI</name>
    <name type="ordered locus">lmo0333</name>
</gene>
<name>INLI_LISMO</name>